<geneLocation type="chloroplast"/>
<dbReference type="EMBL" id="X15901">
    <property type="protein sequence ID" value="CAA33957.1"/>
    <property type="molecule type" value="Genomic_DNA"/>
</dbReference>
<dbReference type="EMBL" id="AY522330">
    <property type="status" value="NOT_ANNOTATED_CDS"/>
    <property type="molecule type" value="Genomic_DNA"/>
</dbReference>
<dbReference type="PIR" id="JQ0235">
    <property type="entry name" value="A1RZI"/>
</dbReference>
<dbReference type="RefSeq" id="NP_039395.1">
    <property type="nucleotide sequence ID" value="NC_001320.1"/>
</dbReference>
<dbReference type="SMR" id="P12186"/>
<dbReference type="FunCoup" id="P12186">
    <property type="interactions" value="32"/>
</dbReference>
<dbReference type="STRING" id="39947.P12186"/>
<dbReference type="PaxDb" id="39947-P12186"/>
<dbReference type="GeneID" id="3131467"/>
<dbReference type="KEGG" id="dosa:CAA33957.1"/>
<dbReference type="KEGG" id="osa:3131467"/>
<dbReference type="InParanoid" id="P12186"/>
<dbReference type="OrthoDB" id="35618at2759"/>
<dbReference type="Proteomes" id="UP000059680">
    <property type="component" value="Chloroplast"/>
</dbReference>
<dbReference type="GO" id="GO:0009535">
    <property type="term" value="C:chloroplast thylakoid membrane"/>
    <property type="evidence" value="ECO:0007669"/>
    <property type="project" value="UniProtKB-SubCell"/>
</dbReference>
<dbReference type="GO" id="GO:0009522">
    <property type="term" value="C:photosystem I"/>
    <property type="evidence" value="ECO:0007669"/>
    <property type="project" value="UniProtKB-KW"/>
</dbReference>
<dbReference type="GO" id="GO:0009536">
    <property type="term" value="C:plastid"/>
    <property type="evidence" value="ECO:0000250"/>
    <property type="project" value="Gramene"/>
</dbReference>
<dbReference type="GO" id="GO:0015979">
    <property type="term" value="P:photosynthesis"/>
    <property type="evidence" value="ECO:0007669"/>
    <property type="project" value="UniProtKB-UniRule"/>
</dbReference>
<dbReference type="HAMAP" id="MF_00431">
    <property type="entry name" value="PSI_PsaI"/>
    <property type="match status" value="1"/>
</dbReference>
<dbReference type="InterPro" id="IPR001302">
    <property type="entry name" value="PSI_PsaI"/>
</dbReference>
<dbReference type="InterPro" id="IPR036357">
    <property type="entry name" value="PSI_PsaI_sf"/>
</dbReference>
<dbReference type="NCBIfam" id="TIGR03052">
    <property type="entry name" value="PS_I_psaI"/>
    <property type="match status" value="1"/>
</dbReference>
<dbReference type="PANTHER" id="PTHR35775">
    <property type="match status" value="1"/>
</dbReference>
<dbReference type="PANTHER" id="PTHR35775:SF2">
    <property type="entry name" value="PHOTOSYSTEM I REACTION CENTER SUBUNIT VIII"/>
    <property type="match status" value="1"/>
</dbReference>
<dbReference type="Pfam" id="PF00796">
    <property type="entry name" value="PSI_8"/>
    <property type="match status" value="1"/>
</dbReference>
<dbReference type="SUPFAM" id="SSF81540">
    <property type="entry name" value="Subunit VIII of photosystem I reaction centre, PsaI"/>
    <property type="match status" value="1"/>
</dbReference>
<protein>
    <recommendedName>
        <fullName>Photosystem I reaction center subunit VIII</fullName>
        <shortName>PSI-I</shortName>
    </recommendedName>
</protein>
<sequence length="36" mass="4028">MMDFNLPSIFVPLVGLVFPAIAMASLFLYVQKNKIV</sequence>
<proteinExistence type="inferred from homology"/>
<name>PSAI_ORYSJ</name>
<accession>P12186</accession>
<organism>
    <name type="scientific">Oryza sativa subsp. japonica</name>
    <name type="common">Rice</name>
    <dbReference type="NCBI Taxonomy" id="39947"/>
    <lineage>
        <taxon>Eukaryota</taxon>
        <taxon>Viridiplantae</taxon>
        <taxon>Streptophyta</taxon>
        <taxon>Embryophyta</taxon>
        <taxon>Tracheophyta</taxon>
        <taxon>Spermatophyta</taxon>
        <taxon>Magnoliopsida</taxon>
        <taxon>Liliopsida</taxon>
        <taxon>Poales</taxon>
        <taxon>Poaceae</taxon>
        <taxon>BOP clade</taxon>
        <taxon>Oryzoideae</taxon>
        <taxon>Oryzeae</taxon>
        <taxon>Oryzinae</taxon>
        <taxon>Oryza</taxon>
        <taxon>Oryza sativa</taxon>
    </lineage>
</organism>
<evidence type="ECO:0000250" key="1"/>
<evidence type="ECO:0000255" key="2"/>
<evidence type="ECO:0000305" key="3"/>
<gene>
    <name type="primary">psaI</name>
    <name type="ordered locus">LOC_Osp1g00450</name>
</gene>
<keyword id="KW-0150">Chloroplast</keyword>
<keyword id="KW-0472">Membrane</keyword>
<keyword id="KW-0602">Photosynthesis</keyword>
<keyword id="KW-0603">Photosystem I</keyword>
<keyword id="KW-0934">Plastid</keyword>
<keyword id="KW-1185">Reference proteome</keyword>
<keyword id="KW-0793">Thylakoid</keyword>
<keyword id="KW-0812">Transmembrane</keyword>
<keyword id="KW-1133">Transmembrane helix</keyword>
<comment type="function">
    <text evidence="1">May help in the organization of the PsaL subunit.</text>
</comment>
<comment type="subcellular location">
    <subcellularLocation>
        <location evidence="1">Plastid</location>
        <location evidence="1">Chloroplast thylakoid membrane</location>
        <topology evidence="1">Single-pass membrane protein</topology>
    </subcellularLocation>
</comment>
<comment type="similarity">
    <text evidence="3">Belongs to the PsaI family.</text>
</comment>
<feature type="chain" id="PRO_0000194666" description="Photosystem I reaction center subunit VIII">
    <location>
        <begin position="1"/>
        <end position="36"/>
    </location>
</feature>
<feature type="transmembrane region" description="Helical" evidence="2">
    <location>
        <begin position="10"/>
        <end position="30"/>
    </location>
</feature>
<reference key="1">
    <citation type="journal article" date="1989" name="Mol. Gen. Genet.">
        <title>The complete sequence of the rice (Oryza sativa) chloroplast genome: intermolecular recombination between distinct tRNA genes accounts for a major plastid DNA inversion during the evolution of the cereals.</title>
        <authorList>
            <person name="Hiratsuka J."/>
            <person name="Shimada H."/>
            <person name="Whittier R."/>
            <person name="Ishibashi T."/>
            <person name="Sakamoto M."/>
            <person name="Mori M."/>
            <person name="Kondo C."/>
            <person name="Honji Y."/>
            <person name="Sun C.-R."/>
            <person name="Meng B.-Y."/>
            <person name="Li Y.-Q."/>
            <person name="Kanno A."/>
            <person name="Nishizawa Y."/>
            <person name="Hirai A."/>
            <person name="Shinozaki K."/>
            <person name="Sugiura M."/>
        </authorList>
    </citation>
    <scope>NUCLEOTIDE SEQUENCE [LARGE SCALE GENOMIC DNA]</scope>
    <source>
        <strain>cv. Nipponbare</strain>
    </source>
</reference>
<reference key="2">
    <citation type="journal article" date="2004" name="Plant Physiol.">
        <title>A comparison of rice chloroplast genomes.</title>
        <authorList>
            <person name="Tang J."/>
            <person name="Xia H."/>
            <person name="Cao M."/>
            <person name="Zhang X."/>
            <person name="Zeng W."/>
            <person name="Hu S."/>
            <person name="Tong W."/>
            <person name="Wang J."/>
            <person name="Wang J."/>
            <person name="Yu J."/>
            <person name="Yang H."/>
            <person name="Zhu L."/>
        </authorList>
    </citation>
    <scope>NUCLEOTIDE SEQUENCE [LARGE SCALE GENOMIC DNA]</scope>
    <source>
        <strain>cv. Nipponbare</strain>
    </source>
</reference>